<protein>
    <recommendedName>
        <fullName evidence="1">Segregation and condensation protein A</fullName>
    </recommendedName>
</protein>
<reference key="1">
    <citation type="submission" date="2008-05" db="EMBL/GenBank/DDBJ databases">
        <title>Complete genome sequence of Clostridium botulinum E3 str. Alaska E43.</title>
        <authorList>
            <person name="Brinkac L.M."/>
            <person name="Brown J.L."/>
            <person name="Bruce D."/>
            <person name="Detter C."/>
            <person name="Munk C."/>
            <person name="Smith L.A."/>
            <person name="Smith T.J."/>
            <person name="Sutton G."/>
            <person name="Brettin T.S."/>
        </authorList>
    </citation>
    <scope>NUCLEOTIDE SEQUENCE [LARGE SCALE GENOMIC DNA]</scope>
    <source>
        <strain>Alaska E43 / Type E3</strain>
    </source>
</reference>
<feature type="chain" id="PRO_1000187558" description="Segregation and condensation protein A">
    <location>
        <begin position="1"/>
        <end position="251"/>
    </location>
</feature>
<evidence type="ECO:0000255" key="1">
    <source>
        <dbReference type="HAMAP-Rule" id="MF_01805"/>
    </source>
</evidence>
<sequence length="251" mass="30036">MDFPSIKIKDFEGPFDLLLHLIKKNQMDIYNVEISKITNQYLKYIDEMKFMDLEITSEFIVVAATLIEIKSKHLLPKIKKDEEEDEEDQEKNLIEKLILYKKIKKAAEFFKDRYVNSGELYTKKPEIIEEINLTNNNEDIFKNLTLLELYNMYNNLLEIYNNKQNKANVIQKRIYVDKYKIEDKLKYLLGLIENNEVSKFSEIIDKCECKLECIVSFLALLEMVKLKKVRVYQSDSFDNILIERRQDDREE</sequence>
<dbReference type="EMBL" id="CP001078">
    <property type="protein sequence ID" value="ACD51131.1"/>
    <property type="molecule type" value="Genomic_DNA"/>
</dbReference>
<dbReference type="RefSeq" id="WP_012449556.1">
    <property type="nucleotide sequence ID" value="NC_010723.1"/>
</dbReference>
<dbReference type="SMR" id="B2V486"/>
<dbReference type="KEGG" id="cbt:CLH_2095"/>
<dbReference type="HOGENOM" id="CLU_038686_3_0_9"/>
<dbReference type="GO" id="GO:0005737">
    <property type="term" value="C:cytoplasm"/>
    <property type="evidence" value="ECO:0007669"/>
    <property type="project" value="UniProtKB-SubCell"/>
</dbReference>
<dbReference type="GO" id="GO:0051301">
    <property type="term" value="P:cell division"/>
    <property type="evidence" value="ECO:0007669"/>
    <property type="project" value="UniProtKB-KW"/>
</dbReference>
<dbReference type="GO" id="GO:0007059">
    <property type="term" value="P:chromosome segregation"/>
    <property type="evidence" value="ECO:0007669"/>
    <property type="project" value="UniProtKB-UniRule"/>
</dbReference>
<dbReference type="GO" id="GO:0006260">
    <property type="term" value="P:DNA replication"/>
    <property type="evidence" value="ECO:0007669"/>
    <property type="project" value="UniProtKB-UniRule"/>
</dbReference>
<dbReference type="Gene3D" id="6.10.250.2410">
    <property type="match status" value="1"/>
</dbReference>
<dbReference type="Gene3D" id="1.10.10.580">
    <property type="entry name" value="Structural maintenance of chromosome 1. Chain E"/>
    <property type="match status" value="1"/>
</dbReference>
<dbReference type="HAMAP" id="MF_01805">
    <property type="entry name" value="ScpA"/>
    <property type="match status" value="1"/>
</dbReference>
<dbReference type="InterPro" id="IPR003768">
    <property type="entry name" value="ScpA"/>
</dbReference>
<dbReference type="InterPro" id="IPR023093">
    <property type="entry name" value="ScpA-like_C"/>
</dbReference>
<dbReference type="NCBIfam" id="NF000994">
    <property type="entry name" value="PRK00104.1-3"/>
    <property type="match status" value="1"/>
</dbReference>
<dbReference type="PANTHER" id="PTHR33969">
    <property type="entry name" value="SEGREGATION AND CONDENSATION PROTEIN A"/>
    <property type="match status" value="1"/>
</dbReference>
<dbReference type="PANTHER" id="PTHR33969:SF2">
    <property type="entry name" value="SEGREGATION AND CONDENSATION PROTEIN A"/>
    <property type="match status" value="1"/>
</dbReference>
<dbReference type="Pfam" id="PF02616">
    <property type="entry name" value="SMC_ScpA"/>
    <property type="match status" value="1"/>
</dbReference>
<keyword id="KW-0131">Cell cycle</keyword>
<keyword id="KW-0132">Cell division</keyword>
<keyword id="KW-0159">Chromosome partition</keyword>
<keyword id="KW-0963">Cytoplasm</keyword>
<proteinExistence type="inferred from homology"/>
<name>SCPA_CLOBA</name>
<accession>B2V486</accession>
<gene>
    <name evidence="1" type="primary">scpA</name>
    <name type="ordered locus">CLH_2095</name>
</gene>
<organism>
    <name type="scientific">Clostridium botulinum (strain Alaska E43 / Type E3)</name>
    <dbReference type="NCBI Taxonomy" id="508767"/>
    <lineage>
        <taxon>Bacteria</taxon>
        <taxon>Bacillati</taxon>
        <taxon>Bacillota</taxon>
        <taxon>Clostridia</taxon>
        <taxon>Eubacteriales</taxon>
        <taxon>Clostridiaceae</taxon>
        <taxon>Clostridium</taxon>
    </lineage>
</organism>
<comment type="function">
    <text evidence="1">Participates in chromosomal partition during cell division. May act via the formation of a condensin-like complex containing Smc and ScpB that pull DNA away from mid-cell into both cell halves.</text>
</comment>
<comment type="subunit">
    <text evidence="1">Component of a cohesin-like complex composed of ScpA, ScpB and the Smc homodimer, in which ScpA and ScpB bind to the head domain of Smc. The presence of the three proteins is required for the association of the complex with DNA.</text>
</comment>
<comment type="subcellular location">
    <subcellularLocation>
        <location evidence="1">Cytoplasm</location>
    </subcellularLocation>
    <text evidence="1">Associated with two foci at the outer edges of the nucleoid region in young cells, and at four foci within both cell halves in older cells.</text>
</comment>
<comment type="similarity">
    <text evidence="1">Belongs to the ScpA family.</text>
</comment>